<proteinExistence type="inferred from homology"/>
<comment type="catalytic activity">
    <reaction evidence="1">
        <text>(S)-4-hydroxy-2-oxopentanoate = acetaldehyde + pyruvate</text>
        <dbReference type="Rhea" id="RHEA:22624"/>
        <dbReference type="ChEBI" id="CHEBI:15343"/>
        <dbReference type="ChEBI" id="CHEBI:15361"/>
        <dbReference type="ChEBI" id="CHEBI:73143"/>
        <dbReference type="EC" id="4.1.3.39"/>
    </reaction>
</comment>
<comment type="similarity">
    <text evidence="1">Belongs to the 4-hydroxy-2-oxovalerate aldolase family.</text>
</comment>
<gene>
    <name type="primary">mhpE</name>
</gene>
<evidence type="ECO:0000255" key="1">
    <source>
        <dbReference type="HAMAP-Rule" id="MF_01656"/>
    </source>
</evidence>
<dbReference type="EC" id="4.1.3.39" evidence="1"/>
<dbReference type="EMBL" id="AB024335">
    <property type="protein sequence ID" value="BAA82884.1"/>
    <property type="molecule type" value="Genomic_DNA"/>
</dbReference>
<dbReference type="RefSeq" id="WP_149354312.1">
    <property type="nucleotide sequence ID" value="NZ_BKBW01000001.1"/>
</dbReference>
<dbReference type="SMR" id="Q9S152"/>
<dbReference type="GO" id="GO:0003852">
    <property type="term" value="F:2-isopropylmalate synthase activity"/>
    <property type="evidence" value="ECO:0007669"/>
    <property type="project" value="TreeGrafter"/>
</dbReference>
<dbReference type="GO" id="GO:0008701">
    <property type="term" value="F:4-hydroxy-2-oxovalerate aldolase activity"/>
    <property type="evidence" value="ECO:0007669"/>
    <property type="project" value="UniProtKB-UniRule"/>
</dbReference>
<dbReference type="GO" id="GO:0030145">
    <property type="term" value="F:manganese ion binding"/>
    <property type="evidence" value="ECO:0007669"/>
    <property type="project" value="UniProtKB-UniRule"/>
</dbReference>
<dbReference type="GO" id="GO:0009056">
    <property type="term" value="P:catabolic process"/>
    <property type="evidence" value="ECO:0007669"/>
    <property type="project" value="UniProtKB-KW"/>
</dbReference>
<dbReference type="GO" id="GO:0009098">
    <property type="term" value="P:L-leucine biosynthetic process"/>
    <property type="evidence" value="ECO:0007669"/>
    <property type="project" value="TreeGrafter"/>
</dbReference>
<dbReference type="CDD" id="cd07943">
    <property type="entry name" value="DRE_TIM_HOA"/>
    <property type="match status" value="1"/>
</dbReference>
<dbReference type="FunFam" id="1.10.8.60:FF:000042">
    <property type="entry name" value="4-hydroxy-2-oxovalerate aldolase"/>
    <property type="match status" value="1"/>
</dbReference>
<dbReference type="FunFam" id="3.20.20.70:FF:000072">
    <property type="entry name" value="4-hydroxy-2-oxovalerate aldolase"/>
    <property type="match status" value="1"/>
</dbReference>
<dbReference type="Gene3D" id="1.10.8.60">
    <property type="match status" value="1"/>
</dbReference>
<dbReference type="Gene3D" id="3.20.20.70">
    <property type="entry name" value="Aldolase class I"/>
    <property type="match status" value="1"/>
</dbReference>
<dbReference type="HAMAP" id="MF_01656">
    <property type="entry name" value="HOA"/>
    <property type="match status" value="1"/>
</dbReference>
<dbReference type="InterPro" id="IPR050073">
    <property type="entry name" value="2-IPM_HCS-like"/>
</dbReference>
<dbReference type="InterPro" id="IPR017629">
    <property type="entry name" value="4OH_2_O-val_aldolase"/>
</dbReference>
<dbReference type="InterPro" id="IPR013785">
    <property type="entry name" value="Aldolase_TIM"/>
</dbReference>
<dbReference type="InterPro" id="IPR012425">
    <property type="entry name" value="DmpG_comm"/>
</dbReference>
<dbReference type="InterPro" id="IPR035685">
    <property type="entry name" value="DRE_TIM_HOA"/>
</dbReference>
<dbReference type="InterPro" id="IPR000891">
    <property type="entry name" value="PYR_CT"/>
</dbReference>
<dbReference type="NCBIfam" id="TIGR03217">
    <property type="entry name" value="4OH_2_O_val_ald"/>
    <property type="match status" value="1"/>
</dbReference>
<dbReference type="NCBIfam" id="NF006049">
    <property type="entry name" value="PRK08195.1"/>
    <property type="match status" value="1"/>
</dbReference>
<dbReference type="PANTHER" id="PTHR10277:SF9">
    <property type="entry name" value="2-ISOPROPYLMALATE SYNTHASE 1, CHLOROPLASTIC-RELATED"/>
    <property type="match status" value="1"/>
</dbReference>
<dbReference type="PANTHER" id="PTHR10277">
    <property type="entry name" value="HOMOCITRATE SYNTHASE-RELATED"/>
    <property type="match status" value="1"/>
</dbReference>
<dbReference type="Pfam" id="PF07836">
    <property type="entry name" value="DmpG_comm"/>
    <property type="match status" value="1"/>
</dbReference>
<dbReference type="Pfam" id="PF00682">
    <property type="entry name" value="HMGL-like"/>
    <property type="match status" value="1"/>
</dbReference>
<dbReference type="SUPFAM" id="SSF51569">
    <property type="entry name" value="Aldolase"/>
    <property type="match status" value="1"/>
</dbReference>
<dbReference type="SUPFAM" id="SSF89000">
    <property type="entry name" value="post-HMGL domain-like"/>
    <property type="match status" value="1"/>
</dbReference>
<dbReference type="PROSITE" id="PS50991">
    <property type="entry name" value="PYR_CT"/>
    <property type="match status" value="1"/>
</dbReference>
<organism>
    <name type="scientific">Comamonas testosteroni</name>
    <name type="common">Pseudomonas testosteroni</name>
    <dbReference type="NCBI Taxonomy" id="285"/>
    <lineage>
        <taxon>Bacteria</taxon>
        <taxon>Pseudomonadati</taxon>
        <taxon>Pseudomonadota</taxon>
        <taxon>Betaproteobacteria</taxon>
        <taxon>Burkholderiales</taxon>
        <taxon>Comamonadaceae</taxon>
        <taxon>Comamonas</taxon>
    </lineage>
</organism>
<protein>
    <recommendedName>
        <fullName evidence="1">4-hydroxy-2-oxovalerate aldolase 1</fullName>
        <shortName evidence="1">HOA 1</shortName>
        <ecNumber evidence="1">4.1.3.39</ecNumber>
    </recommendedName>
    <alternativeName>
        <fullName evidence="1">4-hydroxy-2-keto-pentanoic acid aldolase 1</fullName>
    </alternativeName>
    <alternativeName>
        <fullName evidence="1">4-hydroxy-2-oxopentanoate aldolase 1</fullName>
    </alternativeName>
</protein>
<sequence length="343" mass="37175">MTQTKKIYISDVTLRDGSHAIRHQYSVEQARQIAQALDEARVDSIEVAHGDGLQGSSFNYGFGAHTDLEWIEAVASVVKHAKITTLLLPGIGTVHDLKAAYEAGVRVVRVATHCTEADVSRQHIEYARQLGMEAVGFLMMSHMTSPKALAEQAKLMESYGATCCYVVDSGGALGMNDVRDRFRAFKDILKPETQTGMHAHHNLSLGVANSIVAVEEGCDRVDASLAGMGAGAGNAPLEVFIAAAERLGWNHGTDLYKLMDAADDIVRPLQDRPVRVDRETLALGYAGVYSSFLRHSEAAAAKYGLKAVDILVELGKRRMVGGQEDMIVDVALDLLRQREAASL</sequence>
<reference key="1">
    <citation type="journal article" date="1999" name="Microbiology">
        <title>Genetic organization and characteristics of the 3-(3-hydroxyphenyl)propionic acid degradation pathway of Comamonas testosteroni TA441.</title>
        <authorList>
            <person name="Arai H."/>
            <person name="Yamamoto T."/>
            <person name="Ohishi T."/>
            <person name="Shimizu T."/>
            <person name="Nakata T."/>
            <person name="Kudo T."/>
        </authorList>
    </citation>
    <scope>NUCLEOTIDE SEQUENCE [GENOMIC DNA]</scope>
    <source>
        <strain>TA441</strain>
    </source>
</reference>
<keyword id="KW-0058">Aromatic hydrocarbons catabolism</keyword>
<keyword id="KW-0456">Lyase</keyword>
<keyword id="KW-0464">Manganese</keyword>
<keyword id="KW-0479">Metal-binding</keyword>
<name>HOA1_COMTE</name>
<feature type="chain" id="PRO_0000337803" description="4-hydroxy-2-oxovalerate aldolase 1">
    <location>
        <begin position="1"/>
        <end position="343"/>
    </location>
</feature>
<feature type="domain" description="Pyruvate carboxyltransferase" evidence="1">
    <location>
        <begin position="7"/>
        <end position="259"/>
    </location>
</feature>
<feature type="active site" description="Proton acceptor" evidence="1">
    <location>
        <position position="19"/>
    </location>
</feature>
<feature type="binding site" evidence="1">
    <location>
        <begin position="15"/>
        <end position="16"/>
    </location>
    <ligand>
        <name>substrate</name>
    </ligand>
</feature>
<feature type="binding site" evidence="1">
    <location>
        <position position="16"/>
    </location>
    <ligand>
        <name>Mn(2+)</name>
        <dbReference type="ChEBI" id="CHEBI:29035"/>
    </ligand>
</feature>
<feature type="binding site" evidence="1">
    <location>
        <position position="169"/>
    </location>
    <ligand>
        <name>substrate</name>
    </ligand>
</feature>
<feature type="binding site" evidence="1">
    <location>
        <position position="198"/>
    </location>
    <ligand>
        <name>Mn(2+)</name>
        <dbReference type="ChEBI" id="CHEBI:29035"/>
    </ligand>
</feature>
<feature type="binding site" evidence="1">
    <location>
        <position position="198"/>
    </location>
    <ligand>
        <name>substrate</name>
    </ligand>
</feature>
<feature type="binding site" evidence="1">
    <location>
        <position position="200"/>
    </location>
    <ligand>
        <name>Mn(2+)</name>
        <dbReference type="ChEBI" id="CHEBI:29035"/>
    </ligand>
</feature>
<feature type="binding site" evidence="1">
    <location>
        <position position="289"/>
    </location>
    <ligand>
        <name>substrate</name>
    </ligand>
</feature>
<feature type="site" description="Transition state stabilizer" evidence="1">
    <location>
        <position position="15"/>
    </location>
</feature>
<accession>Q9S152</accession>